<gene>
    <name evidence="1" type="primary">ttcA</name>
    <name type="ordered locus">Atu1858</name>
    <name type="ORF">AGR_C_3410</name>
</gene>
<feature type="chain" id="PRO_0000348656" description="tRNA-cytidine(32) 2-sulfurtransferase">
    <location>
        <begin position="1"/>
        <end position="311"/>
    </location>
</feature>
<feature type="region of interest" description="Disordered" evidence="2">
    <location>
        <begin position="18"/>
        <end position="38"/>
    </location>
</feature>
<feature type="short sequence motif" description="PP-loop motif" evidence="1">
    <location>
        <begin position="77"/>
        <end position="82"/>
    </location>
</feature>
<feature type="binding site" evidence="1">
    <location>
        <position position="152"/>
    </location>
    <ligand>
        <name>[4Fe-4S] cluster</name>
        <dbReference type="ChEBI" id="CHEBI:49883"/>
    </ligand>
</feature>
<feature type="binding site" evidence="1">
    <location>
        <position position="155"/>
    </location>
    <ligand>
        <name>[4Fe-4S] cluster</name>
        <dbReference type="ChEBI" id="CHEBI:49883"/>
    </ligand>
</feature>
<feature type="binding site" evidence="1">
    <location>
        <position position="243"/>
    </location>
    <ligand>
        <name>[4Fe-4S] cluster</name>
        <dbReference type="ChEBI" id="CHEBI:49883"/>
    </ligand>
</feature>
<proteinExistence type="inferred from homology"/>
<comment type="function">
    <text evidence="1">Catalyzes the ATP-dependent 2-thiolation of cytidine in position 32 of tRNA, to form 2-thiocytidine (s(2)C32). The sulfur atoms are provided by the cysteine/cysteine desulfurase (IscS) system.</text>
</comment>
<comment type="catalytic activity">
    <reaction evidence="1">
        <text>cytidine(32) in tRNA + S-sulfanyl-L-cysteinyl-[cysteine desulfurase] + AH2 + ATP = 2-thiocytidine(32) in tRNA + L-cysteinyl-[cysteine desulfurase] + A + AMP + diphosphate + H(+)</text>
        <dbReference type="Rhea" id="RHEA:57048"/>
        <dbReference type="Rhea" id="RHEA-COMP:10288"/>
        <dbReference type="Rhea" id="RHEA-COMP:12157"/>
        <dbReference type="Rhea" id="RHEA-COMP:12158"/>
        <dbReference type="Rhea" id="RHEA-COMP:14821"/>
        <dbReference type="ChEBI" id="CHEBI:13193"/>
        <dbReference type="ChEBI" id="CHEBI:15378"/>
        <dbReference type="ChEBI" id="CHEBI:17499"/>
        <dbReference type="ChEBI" id="CHEBI:29950"/>
        <dbReference type="ChEBI" id="CHEBI:30616"/>
        <dbReference type="ChEBI" id="CHEBI:33019"/>
        <dbReference type="ChEBI" id="CHEBI:61963"/>
        <dbReference type="ChEBI" id="CHEBI:82748"/>
        <dbReference type="ChEBI" id="CHEBI:141453"/>
        <dbReference type="ChEBI" id="CHEBI:456215"/>
    </reaction>
    <physiologicalReaction direction="left-to-right" evidence="1">
        <dbReference type="Rhea" id="RHEA:57049"/>
    </physiologicalReaction>
</comment>
<comment type="cofactor">
    <cofactor evidence="1">
        <name>Mg(2+)</name>
        <dbReference type="ChEBI" id="CHEBI:18420"/>
    </cofactor>
</comment>
<comment type="cofactor">
    <cofactor evidence="1">
        <name>[4Fe-4S] cluster</name>
        <dbReference type="ChEBI" id="CHEBI:49883"/>
    </cofactor>
    <text evidence="1">Binds 1 [4Fe-4S] cluster per subunit. The cluster is chelated by three Cys residues, the fourth Fe has a free coordination site that may bind a sulfur atom transferred from the persulfide of IscS.</text>
</comment>
<comment type="pathway">
    <text evidence="1">tRNA modification.</text>
</comment>
<comment type="subunit">
    <text evidence="1">Homodimer.</text>
</comment>
<comment type="subcellular location">
    <subcellularLocation>
        <location evidence="1">Cytoplasm</location>
    </subcellularLocation>
</comment>
<comment type="miscellaneous">
    <text evidence="1">The thiolation reaction likely consists of two steps: a first activation step by ATP to form an adenylated intermediate of the target base of tRNA, and a second nucleophilic substitution step of the sulfur (S) atom supplied by the hydrosulfide attached to the Fe-S cluster.</text>
</comment>
<comment type="similarity">
    <text evidence="1">Belongs to the TtcA family.</text>
</comment>
<dbReference type="EC" id="2.8.1.-" evidence="1"/>
<dbReference type="EMBL" id="AE007869">
    <property type="protein sequence ID" value="AAK87625.2"/>
    <property type="molecule type" value="Genomic_DNA"/>
</dbReference>
<dbReference type="RefSeq" id="NP_354840.2">
    <property type="nucleotide sequence ID" value="NC_003062.2"/>
</dbReference>
<dbReference type="RefSeq" id="WP_010971917.1">
    <property type="nucleotide sequence ID" value="NC_003062.2"/>
</dbReference>
<dbReference type="SMR" id="Q7CYD2"/>
<dbReference type="STRING" id="176299.Atu1858"/>
<dbReference type="EnsemblBacteria" id="AAK87625">
    <property type="protein sequence ID" value="AAK87625"/>
    <property type="gene ID" value="Atu1858"/>
</dbReference>
<dbReference type="GeneID" id="1133896"/>
<dbReference type="KEGG" id="atu:Atu1858"/>
<dbReference type="PATRIC" id="fig|176299.10.peg.1871"/>
<dbReference type="eggNOG" id="COG0037">
    <property type="taxonomic scope" value="Bacteria"/>
</dbReference>
<dbReference type="HOGENOM" id="CLU_026481_0_0_5"/>
<dbReference type="OrthoDB" id="9801054at2"/>
<dbReference type="PhylomeDB" id="Q7CYD2"/>
<dbReference type="BioCyc" id="AGRO:ATU1858-MONOMER"/>
<dbReference type="Proteomes" id="UP000000813">
    <property type="component" value="Chromosome circular"/>
</dbReference>
<dbReference type="GO" id="GO:0005737">
    <property type="term" value="C:cytoplasm"/>
    <property type="evidence" value="ECO:0007669"/>
    <property type="project" value="UniProtKB-SubCell"/>
</dbReference>
<dbReference type="GO" id="GO:0051539">
    <property type="term" value="F:4 iron, 4 sulfur cluster binding"/>
    <property type="evidence" value="ECO:0007669"/>
    <property type="project" value="UniProtKB-UniRule"/>
</dbReference>
<dbReference type="GO" id="GO:0005524">
    <property type="term" value="F:ATP binding"/>
    <property type="evidence" value="ECO:0007669"/>
    <property type="project" value="UniProtKB-UniRule"/>
</dbReference>
<dbReference type="GO" id="GO:0000287">
    <property type="term" value="F:magnesium ion binding"/>
    <property type="evidence" value="ECO:0007669"/>
    <property type="project" value="UniProtKB-UniRule"/>
</dbReference>
<dbReference type="GO" id="GO:0016783">
    <property type="term" value="F:sulfurtransferase activity"/>
    <property type="evidence" value="ECO:0007669"/>
    <property type="project" value="UniProtKB-UniRule"/>
</dbReference>
<dbReference type="GO" id="GO:0000049">
    <property type="term" value="F:tRNA binding"/>
    <property type="evidence" value="ECO:0007669"/>
    <property type="project" value="UniProtKB-KW"/>
</dbReference>
<dbReference type="GO" id="GO:0034227">
    <property type="term" value="P:tRNA thio-modification"/>
    <property type="evidence" value="ECO:0007669"/>
    <property type="project" value="UniProtKB-UniRule"/>
</dbReference>
<dbReference type="CDD" id="cd24138">
    <property type="entry name" value="TtcA-like"/>
    <property type="match status" value="1"/>
</dbReference>
<dbReference type="Gene3D" id="3.40.50.620">
    <property type="entry name" value="HUPs"/>
    <property type="match status" value="1"/>
</dbReference>
<dbReference type="HAMAP" id="MF_01850">
    <property type="entry name" value="TtcA"/>
    <property type="match status" value="1"/>
</dbReference>
<dbReference type="InterPro" id="IPR014729">
    <property type="entry name" value="Rossmann-like_a/b/a_fold"/>
</dbReference>
<dbReference type="InterPro" id="IPR011063">
    <property type="entry name" value="TilS/TtcA_N"/>
</dbReference>
<dbReference type="InterPro" id="IPR012089">
    <property type="entry name" value="tRNA_Cyd_32_2_STrfase"/>
</dbReference>
<dbReference type="InterPro" id="IPR035107">
    <property type="entry name" value="tRNA_thiolation_TtcA_Ctu1"/>
</dbReference>
<dbReference type="NCBIfam" id="NF007972">
    <property type="entry name" value="PRK10696.1"/>
    <property type="match status" value="1"/>
</dbReference>
<dbReference type="PANTHER" id="PTHR43686:SF1">
    <property type="entry name" value="AMINOTRAN_5 DOMAIN-CONTAINING PROTEIN"/>
    <property type="match status" value="1"/>
</dbReference>
<dbReference type="PANTHER" id="PTHR43686">
    <property type="entry name" value="SULFURTRANSFERASE-RELATED"/>
    <property type="match status" value="1"/>
</dbReference>
<dbReference type="Pfam" id="PF01171">
    <property type="entry name" value="ATP_bind_3"/>
    <property type="match status" value="1"/>
</dbReference>
<dbReference type="PIRSF" id="PIRSF004976">
    <property type="entry name" value="ATPase_YdaO"/>
    <property type="match status" value="1"/>
</dbReference>
<dbReference type="SUPFAM" id="SSF52402">
    <property type="entry name" value="Adenine nucleotide alpha hydrolases-like"/>
    <property type="match status" value="1"/>
</dbReference>
<reference key="1">
    <citation type="journal article" date="2001" name="Science">
        <title>The genome of the natural genetic engineer Agrobacterium tumefaciens C58.</title>
        <authorList>
            <person name="Wood D.W."/>
            <person name="Setubal J.C."/>
            <person name="Kaul R."/>
            <person name="Monks D.E."/>
            <person name="Kitajima J.P."/>
            <person name="Okura V.K."/>
            <person name="Zhou Y."/>
            <person name="Chen L."/>
            <person name="Wood G.E."/>
            <person name="Almeida N.F. Jr."/>
            <person name="Woo L."/>
            <person name="Chen Y."/>
            <person name="Paulsen I.T."/>
            <person name="Eisen J.A."/>
            <person name="Karp P.D."/>
            <person name="Bovee D. Sr."/>
            <person name="Chapman P."/>
            <person name="Clendenning J."/>
            <person name="Deatherage G."/>
            <person name="Gillet W."/>
            <person name="Grant C."/>
            <person name="Kutyavin T."/>
            <person name="Levy R."/>
            <person name="Li M.-J."/>
            <person name="McClelland E."/>
            <person name="Palmieri A."/>
            <person name="Raymond C."/>
            <person name="Rouse G."/>
            <person name="Saenphimmachak C."/>
            <person name="Wu Z."/>
            <person name="Romero P."/>
            <person name="Gordon D."/>
            <person name="Zhang S."/>
            <person name="Yoo H."/>
            <person name="Tao Y."/>
            <person name="Biddle P."/>
            <person name="Jung M."/>
            <person name="Krespan W."/>
            <person name="Perry M."/>
            <person name="Gordon-Kamm B."/>
            <person name="Liao L."/>
            <person name="Kim S."/>
            <person name="Hendrick C."/>
            <person name="Zhao Z.-Y."/>
            <person name="Dolan M."/>
            <person name="Chumley F."/>
            <person name="Tingey S.V."/>
            <person name="Tomb J.-F."/>
            <person name="Gordon M.P."/>
            <person name="Olson M.V."/>
            <person name="Nester E.W."/>
        </authorList>
    </citation>
    <scope>NUCLEOTIDE SEQUENCE [LARGE SCALE GENOMIC DNA]</scope>
    <source>
        <strain>C58 / ATCC 33970</strain>
    </source>
</reference>
<reference key="2">
    <citation type="journal article" date="2001" name="Science">
        <title>Genome sequence of the plant pathogen and biotechnology agent Agrobacterium tumefaciens C58.</title>
        <authorList>
            <person name="Goodner B."/>
            <person name="Hinkle G."/>
            <person name="Gattung S."/>
            <person name="Miller N."/>
            <person name="Blanchard M."/>
            <person name="Qurollo B."/>
            <person name="Goldman B.S."/>
            <person name="Cao Y."/>
            <person name="Askenazi M."/>
            <person name="Halling C."/>
            <person name="Mullin L."/>
            <person name="Houmiel K."/>
            <person name="Gordon J."/>
            <person name="Vaudin M."/>
            <person name="Iartchouk O."/>
            <person name="Epp A."/>
            <person name="Liu F."/>
            <person name="Wollam C."/>
            <person name="Allinger M."/>
            <person name="Doughty D."/>
            <person name="Scott C."/>
            <person name="Lappas C."/>
            <person name="Markelz B."/>
            <person name="Flanagan C."/>
            <person name="Crowell C."/>
            <person name="Gurson J."/>
            <person name="Lomo C."/>
            <person name="Sear C."/>
            <person name="Strub G."/>
            <person name="Cielo C."/>
            <person name="Slater S."/>
        </authorList>
    </citation>
    <scope>NUCLEOTIDE SEQUENCE [LARGE SCALE GENOMIC DNA]</scope>
    <source>
        <strain>C58 / ATCC 33970</strain>
    </source>
</reference>
<keyword id="KW-0004">4Fe-4S</keyword>
<keyword id="KW-0067">ATP-binding</keyword>
<keyword id="KW-0963">Cytoplasm</keyword>
<keyword id="KW-0408">Iron</keyword>
<keyword id="KW-0411">Iron-sulfur</keyword>
<keyword id="KW-0460">Magnesium</keyword>
<keyword id="KW-0479">Metal-binding</keyword>
<keyword id="KW-0547">Nucleotide-binding</keyword>
<keyword id="KW-1185">Reference proteome</keyword>
<keyword id="KW-0694">RNA-binding</keyword>
<keyword id="KW-0808">Transferase</keyword>
<keyword id="KW-0819">tRNA processing</keyword>
<keyword id="KW-0820">tRNA-binding</keyword>
<organism>
    <name type="scientific">Agrobacterium fabrum (strain C58 / ATCC 33970)</name>
    <name type="common">Agrobacterium tumefaciens (strain C58)</name>
    <dbReference type="NCBI Taxonomy" id="176299"/>
    <lineage>
        <taxon>Bacteria</taxon>
        <taxon>Pseudomonadati</taxon>
        <taxon>Pseudomonadota</taxon>
        <taxon>Alphaproteobacteria</taxon>
        <taxon>Hyphomicrobiales</taxon>
        <taxon>Rhizobiaceae</taxon>
        <taxon>Rhizobium/Agrobacterium group</taxon>
        <taxon>Agrobacterium</taxon>
        <taxon>Agrobacterium tumefaciens complex</taxon>
    </lineage>
</organism>
<evidence type="ECO:0000255" key="1">
    <source>
        <dbReference type="HAMAP-Rule" id="MF_01850"/>
    </source>
</evidence>
<evidence type="ECO:0000256" key="2">
    <source>
        <dbReference type="SAM" id="MobiDB-lite"/>
    </source>
</evidence>
<accession>Q7CYD2</accession>
<name>TTCA_AGRFC</name>
<protein>
    <recommendedName>
        <fullName evidence="1">tRNA-cytidine(32) 2-sulfurtransferase</fullName>
        <ecNumber evidence="1">2.8.1.-</ecNumber>
    </recommendedName>
    <alternativeName>
        <fullName evidence="1">Two-thiocytidine biosynthesis protein A</fullName>
    </alternativeName>
    <alternativeName>
        <fullName evidence="1">tRNA 2-thiocytidine biosynthesis protein TtcA</fullName>
    </alternativeName>
</protein>
<sequence length="311" mass="34711">MNILTKIDDFVDQAGADKVGADHGPSEENGSSHPLFDNAPRSVSFNKLRKRLLRNVRQAFEDFGMLNGQKRWLVGLSGGKDSYGLLALLLDLKWRGLLPVELVACNLDQGQPNFPKHVLPEYLAKIGVAHRIEYRDTYSIVKEKVPSGGTYCSLCSRLRRGNLYRIAREEGCDALLLGHHREDILETFFMNFFHGGRLAGMPAKLLNDEGDLMVMRPLAYCAEEDMAKFAAAMEFPIIPCDLCGSQDGLQRNAMKDMLADIERRMPGRKDVMLRALAHVNPSHLLDPKLFDFSALAVTGASPEERREASPP</sequence>